<keyword id="KW-0378">Hydrolase</keyword>
<keyword id="KW-0464">Manganese</keyword>
<dbReference type="EC" id="3.5.4.2" evidence="1"/>
<dbReference type="EMBL" id="CP000099">
    <property type="protein sequence ID" value="AAZ72220.1"/>
    <property type="molecule type" value="Genomic_DNA"/>
</dbReference>
<dbReference type="SMR" id="Q466H2"/>
<dbReference type="STRING" id="269797.Mbar_A3342"/>
<dbReference type="PaxDb" id="269797-Mbar_A3342"/>
<dbReference type="KEGG" id="mba:Mbar_A3342"/>
<dbReference type="eggNOG" id="arCOG00693">
    <property type="taxonomic scope" value="Archaea"/>
</dbReference>
<dbReference type="HOGENOM" id="CLU_027935_0_0_2"/>
<dbReference type="OrthoDB" id="24954at2157"/>
<dbReference type="GO" id="GO:0000034">
    <property type="term" value="F:adenine deaminase activity"/>
    <property type="evidence" value="ECO:0007669"/>
    <property type="project" value="UniProtKB-UniRule"/>
</dbReference>
<dbReference type="GO" id="GO:0006146">
    <property type="term" value="P:adenine catabolic process"/>
    <property type="evidence" value="ECO:0007669"/>
    <property type="project" value="InterPro"/>
</dbReference>
<dbReference type="CDD" id="cd01295">
    <property type="entry name" value="AdeC"/>
    <property type="match status" value="1"/>
</dbReference>
<dbReference type="FunFam" id="3.20.20.140:FF:000016">
    <property type="entry name" value="Adenine deaminase"/>
    <property type="match status" value="1"/>
</dbReference>
<dbReference type="Gene3D" id="3.20.20.140">
    <property type="entry name" value="Metal-dependent hydrolases"/>
    <property type="match status" value="1"/>
</dbReference>
<dbReference type="Gene3D" id="2.30.40.10">
    <property type="entry name" value="Urease, subunit C, domain 1"/>
    <property type="match status" value="1"/>
</dbReference>
<dbReference type="HAMAP" id="MF_01518">
    <property type="entry name" value="Adenine_deamin"/>
    <property type="match status" value="1"/>
</dbReference>
<dbReference type="InterPro" id="IPR006679">
    <property type="entry name" value="Adenine_deam"/>
</dbReference>
<dbReference type="InterPro" id="IPR026912">
    <property type="entry name" value="Adenine_deam_C"/>
</dbReference>
<dbReference type="InterPro" id="IPR006680">
    <property type="entry name" value="Amidohydro-rel"/>
</dbReference>
<dbReference type="InterPro" id="IPR011059">
    <property type="entry name" value="Metal-dep_hydrolase_composite"/>
</dbReference>
<dbReference type="InterPro" id="IPR032466">
    <property type="entry name" value="Metal_Hydrolase"/>
</dbReference>
<dbReference type="NCBIfam" id="TIGR01178">
    <property type="entry name" value="ade"/>
    <property type="match status" value="1"/>
</dbReference>
<dbReference type="PANTHER" id="PTHR11113:SF2">
    <property type="entry name" value="ADENINE DEAMINASE"/>
    <property type="match status" value="1"/>
</dbReference>
<dbReference type="PANTHER" id="PTHR11113">
    <property type="entry name" value="N-ACETYLGLUCOSAMINE-6-PHOSPHATE DEACETYLASE"/>
    <property type="match status" value="1"/>
</dbReference>
<dbReference type="Pfam" id="PF13382">
    <property type="entry name" value="Adenine_deam_C"/>
    <property type="match status" value="1"/>
</dbReference>
<dbReference type="Pfam" id="PF01979">
    <property type="entry name" value="Amidohydro_1"/>
    <property type="match status" value="1"/>
</dbReference>
<dbReference type="SUPFAM" id="SSF51338">
    <property type="entry name" value="Composite domain of metallo-dependent hydrolases"/>
    <property type="match status" value="1"/>
</dbReference>
<dbReference type="SUPFAM" id="SSF51556">
    <property type="entry name" value="Metallo-dependent hydrolases"/>
    <property type="match status" value="1"/>
</dbReference>
<accession>Q466H2</accession>
<reference key="1">
    <citation type="journal article" date="2006" name="J. Bacteriol.">
        <title>The Methanosarcina barkeri genome: comparative analysis with Methanosarcina acetivorans and Methanosarcina mazei reveals extensive rearrangement within methanosarcinal genomes.</title>
        <authorList>
            <person name="Maeder D.L."/>
            <person name="Anderson I."/>
            <person name="Brettin T.S."/>
            <person name="Bruce D.C."/>
            <person name="Gilna P."/>
            <person name="Han C.S."/>
            <person name="Lapidus A."/>
            <person name="Metcalf W.W."/>
            <person name="Saunders E."/>
            <person name="Tapia R."/>
            <person name="Sowers K.R."/>
        </authorList>
    </citation>
    <scope>NUCLEOTIDE SEQUENCE [LARGE SCALE GENOMIC DNA]</scope>
    <source>
        <strain>Fusaro / DSM 804</strain>
    </source>
</reference>
<organism>
    <name type="scientific">Methanosarcina barkeri (strain Fusaro / DSM 804)</name>
    <dbReference type="NCBI Taxonomy" id="269797"/>
    <lineage>
        <taxon>Archaea</taxon>
        <taxon>Methanobacteriati</taxon>
        <taxon>Methanobacteriota</taxon>
        <taxon>Stenosarchaea group</taxon>
        <taxon>Methanomicrobia</taxon>
        <taxon>Methanosarcinales</taxon>
        <taxon>Methanosarcinaceae</taxon>
        <taxon>Methanosarcina</taxon>
    </lineage>
</organism>
<sequence length="551" mass="60380">MQTYQGIIVDAIYRRKFKGEIAVEHGKIISIEEKEHDIEQYILPGLVDAHVHIESSMTVPSVFARMAVARGTVAVVSDPHEIANVMGEEGIDYMLEDARKAPLKVFFGVPSCVPATPFESAGAVLDAEAVDRLLAREDLHYLSEMMNFPGVVMEFPEVIAKLESAKKYGKNIDGHAPGLNGTDLQKYVGAGISTDHESFAYEEAVEKIKLGMNILIREGSSARNFDTLYKLIDEYPESVMLCTDDSHPDTLIYEGHIDKLLRRGQEKGLDIYNLIRAAVINPVEHYGLNVGLLREGDPADFIIVDDLKAFNVLKTFIDGSCVYNDGKVLFSVEQAPAKNVFNRNKISVDDVKLAMPASGNNGEQMKKIRVIVAQDGELVTGQELALPKVENGNLISDPARDILKMVVLSRYADDPVQIGFIKNIGLKKGAIASSIAHDSHNIIAVGATDEDIVGAVNRLVENRGGIVVGTADNLIDLPLEVSGLMSTLDGKEVAVRYEQLNEEARKLGTSLMSPFMTLSFMSLLVIPELKLGDKGLFDVTKFEFVELFAGE</sequence>
<name>ADEC_METBF</name>
<evidence type="ECO:0000255" key="1">
    <source>
        <dbReference type="HAMAP-Rule" id="MF_01518"/>
    </source>
</evidence>
<proteinExistence type="inferred from homology"/>
<gene>
    <name evidence="1" type="primary">ade</name>
    <name type="ordered locus">Mbar_A3342</name>
</gene>
<protein>
    <recommendedName>
        <fullName evidence="1">Adenine deaminase</fullName>
        <shortName evidence="1">Adenase</shortName>
        <shortName evidence="1">Adenine aminase</shortName>
        <ecNumber evidence="1">3.5.4.2</ecNumber>
    </recommendedName>
</protein>
<feature type="chain" id="PRO_0000296736" description="Adenine deaminase">
    <location>
        <begin position="1"/>
        <end position="551"/>
    </location>
</feature>
<comment type="catalytic activity">
    <reaction evidence="1">
        <text>adenine + H2O + H(+) = hypoxanthine + NH4(+)</text>
        <dbReference type="Rhea" id="RHEA:23688"/>
        <dbReference type="ChEBI" id="CHEBI:15377"/>
        <dbReference type="ChEBI" id="CHEBI:15378"/>
        <dbReference type="ChEBI" id="CHEBI:16708"/>
        <dbReference type="ChEBI" id="CHEBI:17368"/>
        <dbReference type="ChEBI" id="CHEBI:28938"/>
        <dbReference type="EC" id="3.5.4.2"/>
    </reaction>
</comment>
<comment type="cofactor">
    <cofactor evidence="1">
        <name>Mn(2+)</name>
        <dbReference type="ChEBI" id="CHEBI:29035"/>
    </cofactor>
</comment>
<comment type="similarity">
    <text evidence="1">Belongs to the metallo-dependent hydrolases superfamily. Adenine deaminase family.</text>
</comment>